<proteinExistence type="inferred from homology"/>
<name>MSRA_METM7</name>
<organism>
    <name type="scientific">Methanococcus maripaludis (strain C7 / ATCC BAA-1331)</name>
    <dbReference type="NCBI Taxonomy" id="426368"/>
    <lineage>
        <taxon>Archaea</taxon>
        <taxon>Methanobacteriati</taxon>
        <taxon>Methanobacteriota</taxon>
        <taxon>Methanomada group</taxon>
        <taxon>Methanococci</taxon>
        <taxon>Methanococcales</taxon>
        <taxon>Methanococcaceae</taxon>
        <taxon>Methanococcus</taxon>
    </lineage>
</organism>
<gene>
    <name evidence="1" type="primary">msrA</name>
    <name type="ordered locus">MmarC7_0092</name>
</gene>
<sequence length="157" mass="18168">MANTETAVFGMGCFWSAEELFRHVDGVISTEVGYMGGNVKNPTYGQVCRGKSGHIEVVKVSYDSKIITYDDLLELFWKNHDPTTPNRQGWDVGEQYSSHIFYFTDEQRIVAEKSLEKMQCYMDLKIVTAIKKASDFFPAEEYHQKYFMKKNNCILNF</sequence>
<keyword id="KW-0560">Oxidoreductase</keyword>
<dbReference type="EC" id="1.8.4.11" evidence="1"/>
<dbReference type="EMBL" id="CP000745">
    <property type="protein sequence ID" value="ABR65162.1"/>
    <property type="molecule type" value="Genomic_DNA"/>
</dbReference>
<dbReference type="SMR" id="A6VFD6"/>
<dbReference type="STRING" id="426368.MmarC7_0092"/>
<dbReference type="KEGG" id="mmz:MmarC7_0092"/>
<dbReference type="eggNOG" id="arCOG02816">
    <property type="taxonomic scope" value="Archaea"/>
</dbReference>
<dbReference type="HOGENOM" id="CLU_031040_10_2_2"/>
<dbReference type="OrthoDB" id="7150at2157"/>
<dbReference type="GO" id="GO:0033744">
    <property type="term" value="F:L-methionine:thioredoxin-disulfide S-oxidoreductase activity"/>
    <property type="evidence" value="ECO:0007669"/>
    <property type="project" value="RHEA"/>
</dbReference>
<dbReference type="GO" id="GO:0008113">
    <property type="term" value="F:peptide-methionine (S)-S-oxide reductase activity"/>
    <property type="evidence" value="ECO:0007669"/>
    <property type="project" value="UniProtKB-UniRule"/>
</dbReference>
<dbReference type="GO" id="GO:0036211">
    <property type="term" value="P:protein modification process"/>
    <property type="evidence" value="ECO:0007669"/>
    <property type="project" value="UniProtKB-UniRule"/>
</dbReference>
<dbReference type="Gene3D" id="3.30.1060.10">
    <property type="entry name" value="Peptide methionine sulphoxide reductase MsrA"/>
    <property type="match status" value="1"/>
</dbReference>
<dbReference type="HAMAP" id="MF_01401">
    <property type="entry name" value="MsrA"/>
    <property type="match status" value="1"/>
</dbReference>
<dbReference type="InterPro" id="IPR002569">
    <property type="entry name" value="Met_Sox_Rdtase_MsrA_dom"/>
</dbReference>
<dbReference type="InterPro" id="IPR036509">
    <property type="entry name" value="Met_Sox_Rdtase_MsrA_sf"/>
</dbReference>
<dbReference type="NCBIfam" id="TIGR00401">
    <property type="entry name" value="msrA"/>
    <property type="match status" value="1"/>
</dbReference>
<dbReference type="PANTHER" id="PTHR43774">
    <property type="entry name" value="PEPTIDE METHIONINE SULFOXIDE REDUCTASE"/>
    <property type="match status" value="1"/>
</dbReference>
<dbReference type="PANTHER" id="PTHR43774:SF1">
    <property type="entry name" value="PEPTIDE METHIONINE SULFOXIDE REDUCTASE MSRA 2"/>
    <property type="match status" value="1"/>
</dbReference>
<dbReference type="Pfam" id="PF01625">
    <property type="entry name" value="PMSR"/>
    <property type="match status" value="1"/>
</dbReference>
<dbReference type="SUPFAM" id="SSF55068">
    <property type="entry name" value="Peptide methionine sulfoxide reductase"/>
    <property type="match status" value="1"/>
</dbReference>
<reference key="1">
    <citation type="submission" date="2007-06" db="EMBL/GenBank/DDBJ databases">
        <title>Complete sequence of Methanococcus maripaludis C7.</title>
        <authorList>
            <consortium name="US DOE Joint Genome Institute"/>
            <person name="Copeland A."/>
            <person name="Lucas S."/>
            <person name="Lapidus A."/>
            <person name="Barry K."/>
            <person name="Glavina del Rio T."/>
            <person name="Dalin E."/>
            <person name="Tice H."/>
            <person name="Pitluck S."/>
            <person name="Clum A."/>
            <person name="Schmutz J."/>
            <person name="Larimer F."/>
            <person name="Land M."/>
            <person name="Hauser L."/>
            <person name="Kyrpides N."/>
            <person name="Anderson I."/>
            <person name="Sieprawska-Lupa M."/>
            <person name="Whitman W.B."/>
            <person name="Richardson P."/>
        </authorList>
    </citation>
    <scope>NUCLEOTIDE SEQUENCE [LARGE SCALE GENOMIC DNA]</scope>
    <source>
        <strain>C7 / ATCC BAA-1331</strain>
    </source>
</reference>
<accession>A6VFD6</accession>
<evidence type="ECO:0000255" key="1">
    <source>
        <dbReference type="HAMAP-Rule" id="MF_01401"/>
    </source>
</evidence>
<feature type="chain" id="PRO_1000068341" description="Peptide methionine sulfoxide reductase MsrA">
    <location>
        <begin position="1"/>
        <end position="157"/>
    </location>
</feature>
<feature type="active site" evidence="1">
    <location>
        <position position="13"/>
    </location>
</feature>
<comment type="function">
    <text evidence="1">Has an important function as a repair enzyme for proteins that have been inactivated by oxidation. Catalyzes the reversible oxidation-reduction of methionine sulfoxide in proteins to methionine.</text>
</comment>
<comment type="catalytic activity">
    <reaction evidence="1">
        <text>L-methionyl-[protein] + [thioredoxin]-disulfide + H2O = L-methionyl-(S)-S-oxide-[protein] + [thioredoxin]-dithiol</text>
        <dbReference type="Rhea" id="RHEA:14217"/>
        <dbReference type="Rhea" id="RHEA-COMP:10698"/>
        <dbReference type="Rhea" id="RHEA-COMP:10700"/>
        <dbReference type="Rhea" id="RHEA-COMP:12313"/>
        <dbReference type="Rhea" id="RHEA-COMP:12315"/>
        <dbReference type="ChEBI" id="CHEBI:15377"/>
        <dbReference type="ChEBI" id="CHEBI:16044"/>
        <dbReference type="ChEBI" id="CHEBI:29950"/>
        <dbReference type="ChEBI" id="CHEBI:44120"/>
        <dbReference type="ChEBI" id="CHEBI:50058"/>
        <dbReference type="EC" id="1.8.4.11"/>
    </reaction>
</comment>
<comment type="catalytic activity">
    <reaction evidence="1">
        <text>[thioredoxin]-disulfide + L-methionine + H2O = L-methionine (S)-S-oxide + [thioredoxin]-dithiol</text>
        <dbReference type="Rhea" id="RHEA:19993"/>
        <dbReference type="Rhea" id="RHEA-COMP:10698"/>
        <dbReference type="Rhea" id="RHEA-COMP:10700"/>
        <dbReference type="ChEBI" id="CHEBI:15377"/>
        <dbReference type="ChEBI" id="CHEBI:29950"/>
        <dbReference type="ChEBI" id="CHEBI:50058"/>
        <dbReference type="ChEBI" id="CHEBI:57844"/>
        <dbReference type="ChEBI" id="CHEBI:58772"/>
        <dbReference type="EC" id="1.8.4.11"/>
    </reaction>
</comment>
<comment type="similarity">
    <text evidence="1">Belongs to the MsrA Met sulfoxide reductase family.</text>
</comment>
<protein>
    <recommendedName>
        <fullName evidence="1">Peptide methionine sulfoxide reductase MsrA</fullName>
        <shortName evidence="1">Protein-methionine-S-oxide reductase</shortName>
        <ecNumber evidence="1">1.8.4.11</ecNumber>
    </recommendedName>
    <alternativeName>
        <fullName evidence="1">Peptide-methionine (S)-S-oxide reductase</fullName>
        <shortName evidence="1">Peptide Met(O) reductase</shortName>
    </alternativeName>
</protein>